<comment type="function">
    <text>Electron carrier protein. The oxidized form of the cytochrome c heme group can accept an electron from the heme group of the cytochrome c1 subunit of cytochrome reductase. Cytochrome c then transfers this electron to the cytochrome oxidase complex, the final protein carrier in the mitochondrial electron-transport chain.</text>
</comment>
<comment type="function">
    <text>Plays a role in apoptosis. Suppression of the anti-apoptotic members or activation of the pro-apoptotic members of the Bcl-2 family leads to altered mitochondrial membrane permeability resulting in release of cytochrome c into the cytosol. Binding of cytochrome c to Apaf-1 triggers the activation of caspase-9, which then accelerates apoptosis by activating other caspases.</text>
</comment>
<comment type="interaction">
    <interactant intactId="EBI-446479">
        <id>P99999</id>
    </interactant>
    <interactant intactId="EBI-446492">
        <id>O14727</id>
        <label>APAF1</label>
    </interactant>
    <organismsDiffer>false</organismsDiffer>
    <experiments>6</experiments>
</comment>
<comment type="interaction">
    <interactant intactId="EBI-446479">
        <id>P99999</id>
    </interactant>
    <interactant intactId="EBI-77613">
        <id>P05067</id>
        <label>APP</label>
    </interactant>
    <organismsDiffer>false</organismsDiffer>
    <experiments>3</experiments>
</comment>
<comment type="interaction">
    <interactant intactId="EBI-446479">
        <id>P99999</id>
    </interactant>
    <interactant intactId="EBI-10254793">
        <id>Q6XD76</id>
        <label>ASCL4</label>
    </interactant>
    <organismsDiffer>false</organismsDiffer>
    <experiments>3</experiments>
</comment>
<comment type="interaction">
    <interactant intactId="EBI-446479">
        <id>P99999</id>
    </interactant>
    <interactant intactId="EBI-10693038">
        <id>Q9NSI6-4</id>
        <label>BRWD1</label>
    </interactant>
    <organismsDiffer>false</organismsDiffer>
    <experiments>3</experiments>
</comment>
<comment type="interaction">
    <interactant intactId="EBI-446479">
        <id>P99999</id>
    </interactant>
    <interactant intactId="EBI-18036948">
        <id>Q3SXR2</id>
        <label>C3orf36</label>
    </interactant>
    <organismsDiffer>false</organismsDiffer>
    <experiments>3</experiments>
</comment>
<comment type="interaction">
    <interactant intactId="EBI-446479">
        <id>P99999</id>
    </interactant>
    <interactant intactId="EBI-6269632">
        <id>Q96BR5</id>
        <label>COA7</label>
    </interactant>
    <organismsDiffer>false</organismsDiffer>
    <experiments>3</experiments>
</comment>
<comment type="interaction">
    <interactant intactId="EBI-446479">
        <id>P99999</id>
    </interactant>
    <interactant intactId="EBI-25835363">
        <id>Q9UKG9-2</id>
        <label>CROT</label>
    </interactant>
    <organismsDiffer>false</organismsDiffer>
    <experiments>3</experiments>
</comment>
<comment type="interaction">
    <interactant intactId="EBI-446479">
        <id>P99999</id>
    </interactant>
    <interactant intactId="EBI-711990">
        <id>O00303</id>
        <label>EIF3F</label>
    </interactant>
    <organismsDiffer>false</organismsDiffer>
    <experiments>3</experiments>
</comment>
<comment type="interaction">
    <interactant intactId="EBI-446479">
        <id>P99999</id>
    </interactant>
    <interactant intactId="EBI-8468186">
        <id>Q8IZU1</id>
        <label>FAM9A</label>
    </interactant>
    <organismsDiffer>false</organismsDiffer>
    <experiments>3</experiments>
</comment>
<comment type="interaction">
    <interactant intactId="EBI-446479">
        <id>P99999</id>
    </interactant>
    <interactant intactId="EBI-6425864">
        <id>Q3SYB3</id>
        <label>FOXD4L6</label>
    </interactant>
    <organismsDiffer>false</organismsDiffer>
    <experiments>3</experiments>
</comment>
<comment type="interaction">
    <interactant intactId="EBI-446479">
        <id>P99999</id>
    </interactant>
    <interactant intactId="EBI-515315">
        <id>P06241</id>
        <label>FYN</label>
    </interactant>
    <organismsDiffer>false</organismsDiffer>
    <experiments>3</experiments>
</comment>
<comment type="interaction">
    <interactant intactId="EBI-446479">
        <id>P99999</id>
    </interactant>
    <interactant intactId="EBI-743960">
        <id>Q8N5Z5</id>
        <label>KCTD17</label>
    </interactant>
    <organismsDiffer>false</organismsDiffer>
    <experiments>3</experiments>
</comment>
<comment type="interaction">
    <interactant intactId="EBI-446479">
        <id>P99999</id>
    </interactant>
    <interactant intactId="EBI-10171697">
        <id>Q6A162</id>
        <label>KRT40</label>
    </interactant>
    <organismsDiffer>false</organismsDiffer>
    <experiments>6</experiments>
</comment>
<comment type="interaction">
    <interactant intactId="EBI-446479">
        <id>P99999</id>
    </interactant>
    <interactant intactId="EBI-2510853">
        <id>Q1L5Z9</id>
        <label>LONRF2</label>
    </interactant>
    <organismsDiffer>false</organismsDiffer>
    <experiments>3</experiments>
</comment>
<comment type="interaction">
    <interactant intactId="EBI-446479">
        <id>P99999</id>
    </interactant>
    <interactant intactId="EBI-9083443">
        <id>P02750</id>
        <label>LRG1</label>
    </interactant>
    <organismsDiffer>false</organismsDiffer>
    <experiments>4</experiments>
</comment>
<comment type="interaction">
    <interactant intactId="EBI-446479">
        <id>P99999</id>
    </interactant>
    <interactant intactId="EBI-14752528">
        <id>Q8IYG6</id>
        <label>LRRC56</label>
    </interactant>
    <organismsDiffer>false</organismsDiffer>
    <experiments>3</experiments>
</comment>
<comment type="interaction">
    <interactant intactId="EBI-446479">
        <id>P99999</id>
    </interactant>
    <interactant intactId="EBI-16439278">
        <id>Q6FHY5</id>
        <label>MEOX2</label>
    </interactant>
    <organismsDiffer>false</organismsDiffer>
    <experiments>3</experiments>
</comment>
<comment type="interaction">
    <interactant intactId="EBI-446479">
        <id>P99999</id>
    </interactant>
    <interactant intactId="EBI-25835557">
        <id>A0A0A0MR05</id>
        <label>MLST8</label>
    </interactant>
    <organismsDiffer>false</organismsDiffer>
    <experiments>3</experiments>
</comment>
<comment type="interaction">
    <interactant intactId="EBI-446479">
        <id>P99999</id>
    </interactant>
    <interactant intactId="EBI-722852">
        <id>Q9BUL5</id>
        <label>PHF23</label>
    </interactant>
    <organismsDiffer>false</organismsDiffer>
    <experiments>3</experiments>
</comment>
<comment type="interaction">
    <interactant intactId="EBI-446479">
        <id>P99999</id>
    </interactant>
    <interactant intactId="EBI-25835994">
        <id>Q6ZMI0-5</id>
        <label>PPP1R21</label>
    </interactant>
    <organismsDiffer>false</organismsDiffer>
    <experiments>3</experiments>
</comment>
<comment type="interaction">
    <interactant intactId="EBI-446479">
        <id>P99999</id>
    </interactant>
    <interactant intactId="EBI-10248967">
        <id>Q66K80</id>
        <label>RUSC1-AS1</label>
    </interactant>
    <organismsDiffer>false</organismsDiffer>
    <experiments>3</experiments>
</comment>
<comment type="interaction">
    <interactant intactId="EBI-446479">
        <id>P99999</id>
    </interactant>
    <interactant intactId="EBI-9089805">
        <id>Q9NTN9-3</id>
        <label>SEMA4G</label>
    </interactant>
    <organismsDiffer>false</organismsDiffer>
    <experiments>3</experiments>
</comment>
<comment type="interaction">
    <interactant intactId="EBI-446479">
        <id>P99999</id>
    </interactant>
    <interactant intactId="EBI-985879">
        <id>P37840</id>
        <label>SNCA</label>
    </interactant>
    <organismsDiffer>false</organismsDiffer>
    <experiments>3</experiments>
</comment>
<comment type="interaction">
    <interactant intactId="EBI-446479">
        <id>P99999</id>
    </interactant>
    <interactant intactId="EBI-632715">
        <id>Q13573</id>
        <label>SNW1</label>
    </interactant>
    <organismsDiffer>false</organismsDiffer>
    <experiments>3</experiments>
</comment>
<comment type="interaction">
    <interactant intactId="EBI-446479">
        <id>P99999</id>
    </interactant>
    <interactant intactId="EBI-21560407">
        <id>Q92797-2</id>
        <label>SYMPK</label>
    </interactant>
    <organismsDiffer>false</organismsDiffer>
    <experiments>3</experiments>
</comment>
<comment type="interaction">
    <interactant intactId="EBI-446479">
        <id>P99999</id>
    </interactant>
    <interactant intactId="EBI-10176632">
        <id>O43829</id>
        <label>ZBTB14</label>
    </interactant>
    <organismsDiffer>false</organismsDiffer>
    <experiments>3</experiments>
</comment>
<comment type="interaction">
    <interactant intactId="EBI-446479">
        <id>P99999</id>
    </interactant>
    <interactant intactId="EBI-1777995">
        <id>Q9FKS5</id>
        <label>CYC1-2</label>
    </interactant>
    <organismsDiffer>true</organismsDiffer>
    <experiments>2</experiments>
</comment>
<comment type="subcellular location">
    <subcellularLocation>
        <location>Mitochondrion intermembrane space</location>
    </subcellularLocation>
    <text>Loosely associated with the inner membrane.</text>
</comment>
<comment type="PTM">
    <text>Binds 1 heme c group covalently per subunit.</text>
</comment>
<comment type="PTM">
    <text evidence="1">Phosphorylation at Tyr-49 and Tyr-98 both reduce by half the turnover in the reaction with cytochrome c oxidase, down-regulating mitochondrial respiration.</text>
</comment>
<comment type="disease" evidence="7">
    <disease id="DI-01100">
        <name>Thrombocytopenia 4</name>
        <acronym>THC4</acronym>
        <description>A form of thrombocytopenia, a hematologic disorder defined by a decrease in the number of platelets in circulating blood, resulting in the potential for increased bleeding and decreased ability for clotting.</description>
        <dbReference type="MIM" id="612004"/>
    </disease>
    <text>The disease is caused by variants affecting the gene represented in this entry.</text>
</comment>
<comment type="similarity">
    <text evidence="9">Belongs to the cytochrome c family.</text>
</comment>
<comment type="online information" name="Protein Spotlight">
    <link uri="https://www.proteinspotlight.org/back_issues/076"/>
    <text>Life shuttle - Issue 76 of November 2006</text>
</comment>
<comment type="online information" name="Protein Spotlight">
    <link uri="https://www.proteinspotlight.org/back_issues/088/"/>
    <text>An unexpected place - Issue 88 of November 2007</text>
</comment>
<sequence length="105" mass="11749">MGDVEKGKKIFIMKCSQCHTVEKGGKHKTGPNLHGLFGRKTGQAPGYSYTAANKNKGIIWGEDTLMEYLENPKKYIPGTKMIFVGIKKKEERADLIAYLKKATNE</sequence>
<feature type="initiator methionine" description="Removed" evidence="5 6">
    <location>
        <position position="1"/>
    </location>
</feature>
<feature type="chain" id="PRO_0000108218" description="Cytochrome c" evidence="4">
    <location>
        <begin position="2"/>
        <end position="105"/>
    </location>
</feature>
<feature type="binding site" description="covalent" evidence="4 8">
    <location>
        <position position="15"/>
    </location>
    <ligand>
        <name>heme c</name>
        <dbReference type="ChEBI" id="CHEBI:61717"/>
    </ligand>
</feature>
<feature type="binding site" description="covalent" evidence="4 8">
    <location>
        <position position="18"/>
    </location>
    <ligand>
        <name>heme c</name>
        <dbReference type="ChEBI" id="CHEBI:61717"/>
    </ligand>
</feature>
<feature type="binding site" description="axial binding residue" evidence="4 8">
    <location>
        <position position="19"/>
    </location>
    <ligand>
        <name>heme c</name>
        <dbReference type="ChEBI" id="CHEBI:61717"/>
    </ligand>
    <ligandPart>
        <name>Fe</name>
        <dbReference type="ChEBI" id="CHEBI:18248"/>
    </ligandPart>
</feature>
<feature type="binding site" description="axial binding residue">
    <location>
        <position position="81"/>
    </location>
    <ligand>
        <name>heme c</name>
        <dbReference type="ChEBI" id="CHEBI:61717"/>
    </ligand>
    <ligandPart>
        <name>Fe</name>
        <dbReference type="ChEBI" id="CHEBI:18248"/>
    </ligandPart>
</feature>
<feature type="modified residue" description="N-acetylglycine" evidence="5">
    <location>
        <position position="2"/>
    </location>
</feature>
<feature type="modified residue" description="Phosphotyrosine" evidence="2">
    <location>
        <position position="49"/>
    </location>
</feature>
<feature type="modified residue" description="N6-succinyllysine" evidence="3">
    <location>
        <position position="56"/>
    </location>
</feature>
<feature type="modified residue" description="N6-acetyllysine; alternate" evidence="3">
    <location>
        <position position="73"/>
    </location>
</feature>
<feature type="modified residue" description="N6-succinyllysine; alternate" evidence="3">
    <location>
        <position position="73"/>
    </location>
</feature>
<feature type="modified residue" description="Phosphotyrosine" evidence="2">
    <location>
        <position position="98"/>
    </location>
</feature>
<feature type="modified residue" description="N6-acetyllysine" evidence="3">
    <location>
        <position position="100"/>
    </location>
</feature>
<feature type="sequence variant" id="VAR_044450" description="In THC4; increases the pro-apoptotic function by triggering caspase activation more efficiently than wild-type; does not affect the redox function; dbSNP:rs121918552." evidence="7">
    <original>G</original>
    <variation>S</variation>
    <location>
        <position position="42"/>
    </location>
</feature>
<feature type="sequence variant" id="VAR_048850" description="In dbSNP:rs11548795.">
    <original>K</original>
    <variation>R</variation>
    <location>
        <position position="56"/>
    </location>
</feature>
<feature type="sequence variant" id="VAR_002204">
    <original>M</original>
    <variation>L</variation>
    <location>
        <position position="66"/>
    </location>
</feature>
<feature type="mutagenesis site" description="No effect on covalent heme attachment." evidence="8">
    <original>K</original>
    <variation>A</variation>
    <variation>D</variation>
    <variation>R</variation>
    <location>
        <position position="6"/>
    </location>
</feature>
<feature type="mutagenesis site" description="Decreased covalent heme attachment." evidence="8">
    <original>F</original>
    <variation>A</variation>
    <location>
        <position position="11"/>
    </location>
</feature>
<feature type="mutagenesis site" description="No effect on covalent heme attachment." evidence="8">
    <original>F</original>
    <variation>Y</variation>
    <location>
        <position position="11"/>
    </location>
</feature>
<feature type="mutagenesis site" description="Decreased covalent heme attachment." evidence="8">
    <original>C</original>
    <variation>S</variation>
    <location>
        <position position="15"/>
    </location>
</feature>
<feature type="mutagenesis site" description="Decreased covalent heme attachment." evidence="8">
    <original>C</original>
    <variation>A</variation>
    <location>
        <position position="18"/>
    </location>
</feature>
<feature type="mutagenesis site" description="Loss of covalent heme attachment." evidence="8">
    <original>H</original>
    <variation>A</variation>
    <location>
        <position position="19"/>
    </location>
</feature>
<feature type="sequence conflict" description="In Ref. 8; AAH15130." evidence="9" ref="8">
    <original>C</original>
    <variation>Y</variation>
    <location>
        <position position="18"/>
    </location>
</feature>
<feature type="sequence conflict" description="In Ref. 8; AAH68464." evidence="9" ref="8">
    <original>T</original>
    <variation>I</variation>
    <location>
        <position position="41"/>
    </location>
</feature>
<feature type="helix" evidence="13">
    <location>
        <begin position="4"/>
        <end position="14"/>
    </location>
</feature>
<feature type="turn" evidence="13">
    <location>
        <begin position="15"/>
        <end position="18"/>
    </location>
</feature>
<feature type="strand" evidence="10">
    <location>
        <begin position="23"/>
        <end position="25"/>
    </location>
</feature>
<feature type="strand" evidence="10">
    <location>
        <begin position="28"/>
        <end position="30"/>
    </location>
</feature>
<feature type="turn" evidence="10">
    <location>
        <begin position="36"/>
        <end position="38"/>
    </location>
</feature>
<feature type="strand" evidence="12">
    <location>
        <begin position="39"/>
        <end position="42"/>
    </location>
</feature>
<feature type="helix" evidence="13">
    <location>
        <begin position="51"/>
        <end position="55"/>
    </location>
</feature>
<feature type="strand" evidence="11">
    <location>
        <begin position="56"/>
        <end position="58"/>
    </location>
</feature>
<feature type="helix" evidence="13">
    <location>
        <begin position="62"/>
        <end position="70"/>
    </location>
</feature>
<feature type="helix" evidence="13">
    <location>
        <begin position="72"/>
        <end position="75"/>
    </location>
</feature>
<feature type="strand" evidence="11">
    <location>
        <begin position="76"/>
        <end position="78"/>
    </location>
</feature>
<feature type="helix" evidence="13">
    <location>
        <begin position="89"/>
        <end position="102"/>
    </location>
</feature>
<keyword id="KW-0002">3D-structure</keyword>
<keyword id="KW-0007">Acetylation</keyword>
<keyword id="KW-0053">Apoptosis</keyword>
<keyword id="KW-0903">Direct protein sequencing</keyword>
<keyword id="KW-0225">Disease variant</keyword>
<keyword id="KW-0249">Electron transport</keyword>
<keyword id="KW-0349">Heme</keyword>
<keyword id="KW-0408">Iron</keyword>
<keyword id="KW-0479">Metal-binding</keyword>
<keyword id="KW-0496">Mitochondrion</keyword>
<keyword id="KW-0597">Phosphoprotein</keyword>
<keyword id="KW-1267">Proteomics identification</keyword>
<keyword id="KW-1185">Reference proteome</keyword>
<keyword id="KW-0679">Respiratory chain</keyword>
<keyword id="KW-0813">Transport</keyword>
<accession>P99999</accession>
<accession>A4D166</accession>
<accession>B2R4I1</accession>
<accession>P00001</accession>
<accession>Q6NUR2</accession>
<accession>Q6NX69</accession>
<accession>Q96BV4</accession>
<proteinExistence type="evidence at protein level"/>
<protein>
    <recommendedName>
        <fullName>Cytochrome c</fullName>
    </recommendedName>
</protein>
<organism>
    <name type="scientific">Homo sapiens</name>
    <name type="common">Human</name>
    <dbReference type="NCBI Taxonomy" id="9606"/>
    <lineage>
        <taxon>Eukaryota</taxon>
        <taxon>Metazoa</taxon>
        <taxon>Chordata</taxon>
        <taxon>Craniata</taxon>
        <taxon>Vertebrata</taxon>
        <taxon>Euteleostomi</taxon>
        <taxon>Mammalia</taxon>
        <taxon>Eutheria</taxon>
        <taxon>Euarchontoglires</taxon>
        <taxon>Primates</taxon>
        <taxon>Haplorrhini</taxon>
        <taxon>Catarrhini</taxon>
        <taxon>Hominidae</taxon>
        <taxon>Homo</taxon>
    </lineage>
</organism>
<reference key="1">
    <citation type="journal article" date="1988" name="Proc. Natl. Acad. Sci. U.S.A.">
        <title>The human somatic cytochrome c gene: two classes of processed pseudogenes demarcate a period of rapid molecular evolution.</title>
        <authorList>
            <person name="Evans M.J."/>
            <person name="Scarpulla R.C."/>
        </authorList>
    </citation>
    <scope>NUCLEOTIDE SEQUENCE [GENOMIC DNA]</scope>
</reference>
<reference key="2">
    <citation type="submission" date="2003-05" db="EMBL/GenBank/DDBJ databases">
        <title>Cloning of human full-length CDSs in BD Creator(TM) system donor vector.</title>
        <authorList>
            <person name="Kalnine N."/>
            <person name="Chen X."/>
            <person name="Rolfs A."/>
            <person name="Halleck A."/>
            <person name="Hines L."/>
            <person name="Eisenstein S."/>
            <person name="Koundinya M."/>
            <person name="Raphael J."/>
            <person name="Moreira D."/>
            <person name="Kelley T."/>
            <person name="LaBaer J."/>
            <person name="Lin Y."/>
            <person name="Phelan M."/>
            <person name="Farmer A."/>
        </authorList>
    </citation>
    <scope>NUCLEOTIDE SEQUENCE [LARGE SCALE MRNA]</scope>
</reference>
<reference key="3">
    <citation type="journal article" date="2004" name="Nat. Genet.">
        <title>Complete sequencing and characterization of 21,243 full-length human cDNAs.</title>
        <authorList>
            <person name="Ota T."/>
            <person name="Suzuki Y."/>
            <person name="Nishikawa T."/>
            <person name="Otsuki T."/>
            <person name="Sugiyama T."/>
            <person name="Irie R."/>
            <person name="Wakamatsu A."/>
            <person name="Hayashi K."/>
            <person name="Sato H."/>
            <person name="Nagai K."/>
            <person name="Kimura K."/>
            <person name="Makita H."/>
            <person name="Sekine M."/>
            <person name="Obayashi M."/>
            <person name="Nishi T."/>
            <person name="Shibahara T."/>
            <person name="Tanaka T."/>
            <person name="Ishii S."/>
            <person name="Yamamoto J."/>
            <person name="Saito K."/>
            <person name="Kawai Y."/>
            <person name="Isono Y."/>
            <person name="Nakamura Y."/>
            <person name="Nagahari K."/>
            <person name="Murakami K."/>
            <person name="Yasuda T."/>
            <person name="Iwayanagi T."/>
            <person name="Wagatsuma M."/>
            <person name="Shiratori A."/>
            <person name="Sudo H."/>
            <person name="Hosoiri T."/>
            <person name="Kaku Y."/>
            <person name="Kodaira H."/>
            <person name="Kondo H."/>
            <person name="Sugawara M."/>
            <person name="Takahashi M."/>
            <person name="Kanda K."/>
            <person name="Yokoi T."/>
            <person name="Furuya T."/>
            <person name="Kikkawa E."/>
            <person name="Omura Y."/>
            <person name="Abe K."/>
            <person name="Kamihara K."/>
            <person name="Katsuta N."/>
            <person name="Sato K."/>
            <person name="Tanikawa M."/>
            <person name="Yamazaki M."/>
            <person name="Ninomiya K."/>
            <person name="Ishibashi T."/>
            <person name="Yamashita H."/>
            <person name="Murakawa K."/>
            <person name="Fujimori K."/>
            <person name="Tanai H."/>
            <person name="Kimata M."/>
            <person name="Watanabe M."/>
            <person name="Hiraoka S."/>
            <person name="Chiba Y."/>
            <person name="Ishida S."/>
            <person name="Ono Y."/>
            <person name="Takiguchi S."/>
            <person name="Watanabe S."/>
            <person name="Yosida M."/>
            <person name="Hotuta T."/>
            <person name="Kusano J."/>
            <person name="Kanehori K."/>
            <person name="Takahashi-Fujii A."/>
            <person name="Hara H."/>
            <person name="Tanase T.-O."/>
            <person name="Nomura Y."/>
            <person name="Togiya S."/>
            <person name="Komai F."/>
            <person name="Hara R."/>
            <person name="Takeuchi K."/>
            <person name="Arita M."/>
            <person name="Imose N."/>
            <person name="Musashino K."/>
            <person name="Yuuki H."/>
            <person name="Oshima A."/>
            <person name="Sasaki N."/>
            <person name="Aotsuka S."/>
            <person name="Yoshikawa Y."/>
            <person name="Matsunawa H."/>
            <person name="Ichihara T."/>
            <person name="Shiohata N."/>
            <person name="Sano S."/>
            <person name="Moriya S."/>
            <person name="Momiyama H."/>
            <person name="Satoh N."/>
            <person name="Takami S."/>
            <person name="Terashima Y."/>
            <person name="Suzuki O."/>
            <person name="Nakagawa S."/>
            <person name="Senoh A."/>
            <person name="Mizoguchi H."/>
            <person name="Goto Y."/>
            <person name="Shimizu F."/>
            <person name="Wakebe H."/>
            <person name="Hishigaki H."/>
            <person name="Watanabe T."/>
            <person name="Sugiyama A."/>
            <person name="Takemoto M."/>
            <person name="Kawakami B."/>
            <person name="Yamazaki M."/>
            <person name="Watanabe K."/>
            <person name="Kumagai A."/>
            <person name="Itakura S."/>
            <person name="Fukuzumi Y."/>
            <person name="Fujimori Y."/>
            <person name="Komiyama M."/>
            <person name="Tashiro H."/>
            <person name="Tanigami A."/>
            <person name="Fujiwara T."/>
            <person name="Ono T."/>
            <person name="Yamada K."/>
            <person name="Fujii Y."/>
            <person name="Ozaki K."/>
            <person name="Hirao M."/>
            <person name="Ohmori Y."/>
            <person name="Kawabata A."/>
            <person name="Hikiji T."/>
            <person name="Kobatake N."/>
            <person name="Inagaki H."/>
            <person name="Ikema Y."/>
            <person name="Okamoto S."/>
            <person name="Okitani R."/>
            <person name="Kawakami T."/>
            <person name="Noguchi S."/>
            <person name="Itoh T."/>
            <person name="Shigeta K."/>
            <person name="Senba T."/>
            <person name="Matsumura K."/>
            <person name="Nakajima Y."/>
            <person name="Mizuno T."/>
            <person name="Morinaga M."/>
            <person name="Sasaki M."/>
            <person name="Togashi T."/>
            <person name="Oyama M."/>
            <person name="Hata H."/>
            <person name="Watanabe M."/>
            <person name="Komatsu T."/>
            <person name="Mizushima-Sugano J."/>
            <person name="Satoh T."/>
            <person name="Shirai Y."/>
            <person name="Takahashi Y."/>
            <person name="Nakagawa K."/>
            <person name="Okumura K."/>
            <person name="Nagase T."/>
            <person name="Nomura N."/>
            <person name="Kikuchi H."/>
            <person name="Masuho Y."/>
            <person name="Yamashita R."/>
            <person name="Nakai K."/>
            <person name="Yada T."/>
            <person name="Nakamura Y."/>
            <person name="Ohara O."/>
            <person name="Isogai T."/>
            <person name="Sugano S."/>
        </authorList>
    </citation>
    <scope>NUCLEOTIDE SEQUENCE [LARGE SCALE MRNA]</scope>
    <source>
        <tissue>Cerebellum</tissue>
    </source>
</reference>
<reference key="4">
    <citation type="journal article" date="2007" name="BMC Genomics">
        <title>The full-ORF clone resource of the German cDNA consortium.</title>
        <authorList>
            <person name="Bechtel S."/>
            <person name="Rosenfelder H."/>
            <person name="Duda A."/>
            <person name="Schmidt C.P."/>
            <person name="Ernst U."/>
            <person name="Wellenreuther R."/>
            <person name="Mehrle A."/>
            <person name="Schuster C."/>
            <person name="Bahr A."/>
            <person name="Bloecker H."/>
            <person name="Heubner D."/>
            <person name="Hoerlein A."/>
            <person name="Michel G."/>
            <person name="Wedler H."/>
            <person name="Koehrer K."/>
            <person name="Ottenwaelder B."/>
            <person name="Poustka A."/>
            <person name="Wiemann S."/>
            <person name="Schupp I."/>
        </authorList>
    </citation>
    <scope>NUCLEOTIDE SEQUENCE [LARGE SCALE MRNA]</scope>
    <source>
        <tissue>Amygdala</tissue>
    </source>
</reference>
<reference key="5">
    <citation type="journal article" date="2003" name="Nature">
        <title>The DNA sequence of human chromosome 7.</title>
        <authorList>
            <person name="Hillier L.W."/>
            <person name="Fulton R.S."/>
            <person name="Fulton L.A."/>
            <person name="Graves T.A."/>
            <person name="Pepin K.H."/>
            <person name="Wagner-McPherson C."/>
            <person name="Layman D."/>
            <person name="Maas J."/>
            <person name="Jaeger S."/>
            <person name="Walker R."/>
            <person name="Wylie K."/>
            <person name="Sekhon M."/>
            <person name="Becker M.C."/>
            <person name="O'Laughlin M.D."/>
            <person name="Schaller M.E."/>
            <person name="Fewell G.A."/>
            <person name="Delehaunty K.D."/>
            <person name="Miner T.L."/>
            <person name="Nash W.E."/>
            <person name="Cordes M."/>
            <person name="Du H."/>
            <person name="Sun H."/>
            <person name="Edwards J."/>
            <person name="Bradshaw-Cordum H."/>
            <person name="Ali J."/>
            <person name="Andrews S."/>
            <person name="Isak A."/>
            <person name="Vanbrunt A."/>
            <person name="Nguyen C."/>
            <person name="Du F."/>
            <person name="Lamar B."/>
            <person name="Courtney L."/>
            <person name="Kalicki J."/>
            <person name="Ozersky P."/>
            <person name="Bielicki L."/>
            <person name="Scott K."/>
            <person name="Holmes A."/>
            <person name="Harkins R."/>
            <person name="Harris A."/>
            <person name="Strong C.M."/>
            <person name="Hou S."/>
            <person name="Tomlinson C."/>
            <person name="Dauphin-Kohlberg S."/>
            <person name="Kozlowicz-Reilly A."/>
            <person name="Leonard S."/>
            <person name="Rohlfing T."/>
            <person name="Rock S.M."/>
            <person name="Tin-Wollam A.-M."/>
            <person name="Abbott A."/>
            <person name="Minx P."/>
            <person name="Maupin R."/>
            <person name="Strowmatt C."/>
            <person name="Latreille P."/>
            <person name="Miller N."/>
            <person name="Johnson D."/>
            <person name="Murray J."/>
            <person name="Woessner J.P."/>
            <person name="Wendl M.C."/>
            <person name="Yang S.-P."/>
            <person name="Schultz B.R."/>
            <person name="Wallis J.W."/>
            <person name="Spieth J."/>
            <person name="Bieri T.A."/>
            <person name="Nelson J.O."/>
            <person name="Berkowicz N."/>
            <person name="Wohldmann P.E."/>
            <person name="Cook L.L."/>
            <person name="Hickenbotham M.T."/>
            <person name="Eldred J."/>
            <person name="Williams D."/>
            <person name="Bedell J.A."/>
            <person name="Mardis E.R."/>
            <person name="Clifton S.W."/>
            <person name="Chissoe S.L."/>
            <person name="Marra M.A."/>
            <person name="Raymond C."/>
            <person name="Haugen E."/>
            <person name="Gillett W."/>
            <person name="Zhou Y."/>
            <person name="James R."/>
            <person name="Phelps K."/>
            <person name="Iadanoto S."/>
            <person name="Bubb K."/>
            <person name="Simms E."/>
            <person name="Levy R."/>
            <person name="Clendenning J."/>
            <person name="Kaul R."/>
            <person name="Kent W.J."/>
            <person name="Furey T.S."/>
            <person name="Baertsch R.A."/>
            <person name="Brent M.R."/>
            <person name="Keibler E."/>
            <person name="Flicek P."/>
            <person name="Bork P."/>
            <person name="Suyama M."/>
            <person name="Bailey J.A."/>
            <person name="Portnoy M.E."/>
            <person name="Torrents D."/>
            <person name="Chinwalla A.T."/>
            <person name="Gish W.R."/>
            <person name="Eddy S.R."/>
            <person name="McPherson J.D."/>
            <person name="Olson M.V."/>
            <person name="Eichler E.E."/>
            <person name="Green E.D."/>
            <person name="Waterston R.H."/>
            <person name="Wilson R.K."/>
        </authorList>
    </citation>
    <scope>NUCLEOTIDE SEQUENCE [LARGE SCALE GENOMIC DNA]</scope>
</reference>
<reference key="6">
    <citation type="journal article" date="2003" name="Science">
        <title>Human chromosome 7: DNA sequence and biology.</title>
        <authorList>
            <person name="Scherer S.W."/>
            <person name="Cheung J."/>
            <person name="MacDonald J.R."/>
            <person name="Osborne L.R."/>
            <person name="Nakabayashi K."/>
            <person name="Herbrick J.-A."/>
            <person name="Carson A.R."/>
            <person name="Parker-Katiraee L."/>
            <person name="Skaug J."/>
            <person name="Khaja R."/>
            <person name="Zhang J."/>
            <person name="Hudek A.K."/>
            <person name="Li M."/>
            <person name="Haddad M."/>
            <person name="Duggan G.E."/>
            <person name="Fernandez B.A."/>
            <person name="Kanematsu E."/>
            <person name="Gentles S."/>
            <person name="Christopoulos C.C."/>
            <person name="Choufani S."/>
            <person name="Kwasnicka D."/>
            <person name="Zheng X.H."/>
            <person name="Lai Z."/>
            <person name="Nusskern D.R."/>
            <person name="Zhang Q."/>
            <person name="Gu Z."/>
            <person name="Lu F."/>
            <person name="Zeesman S."/>
            <person name="Nowaczyk M.J."/>
            <person name="Teshima I."/>
            <person name="Chitayat D."/>
            <person name="Shuman C."/>
            <person name="Weksberg R."/>
            <person name="Zackai E.H."/>
            <person name="Grebe T.A."/>
            <person name="Cox S.R."/>
            <person name="Kirkpatrick S.J."/>
            <person name="Rahman N."/>
            <person name="Friedman J.M."/>
            <person name="Heng H.H.Q."/>
            <person name="Pelicci P.G."/>
            <person name="Lo-Coco F."/>
            <person name="Belloni E."/>
            <person name="Shaffer L.G."/>
            <person name="Pober B."/>
            <person name="Morton C.C."/>
            <person name="Gusella J.F."/>
            <person name="Bruns G.A.P."/>
            <person name="Korf B.R."/>
            <person name="Quade B.J."/>
            <person name="Ligon A.H."/>
            <person name="Ferguson H."/>
            <person name="Higgins A.W."/>
            <person name="Leach N.T."/>
            <person name="Herrick S.R."/>
            <person name="Lemyre E."/>
            <person name="Farra C.G."/>
            <person name="Kim H.-G."/>
            <person name="Summers A.M."/>
            <person name="Gripp K.W."/>
            <person name="Roberts W."/>
            <person name="Szatmari P."/>
            <person name="Winsor E.J.T."/>
            <person name="Grzeschik K.-H."/>
            <person name="Teebi A."/>
            <person name="Minassian B.A."/>
            <person name="Kere J."/>
            <person name="Armengol L."/>
            <person name="Pujana M.A."/>
            <person name="Estivill X."/>
            <person name="Wilson M.D."/>
            <person name="Koop B.F."/>
            <person name="Tosi S."/>
            <person name="Moore G.E."/>
            <person name="Boright A.P."/>
            <person name="Zlotorynski E."/>
            <person name="Kerem B."/>
            <person name="Kroisel P.M."/>
            <person name="Petek E."/>
            <person name="Oscier D.G."/>
            <person name="Mould S.J."/>
            <person name="Doehner H."/>
            <person name="Doehner K."/>
            <person name="Rommens J.M."/>
            <person name="Vincent J.B."/>
            <person name="Venter J.C."/>
            <person name="Li P.W."/>
            <person name="Mural R.J."/>
            <person name="Adams M.D."/>
            <person name="Tsui L.-C."/>
        </authorList>
    </citation>
    <scope>NUCLEOTIDE SEQUENCE [LARGE SCALE GENOMIC DNA]</scope>
</reference>
<reference key="7">
    <citation type="submission" date="2005-07" db="EMBL/GenBank/DDBJ databases">
        <authorList>
            <person name="Mural R.J."/>
            <person name="Istrail S."/>
            <person name="Sutton G.G."/>
            <person name="Florea L."/>
            <person name="Halpern A.L."/>
            <person name="Mobarry C.M."/>
            <person name="Lippert R."/>
            <person name="Walenz B."/>
            <person name="Shatkay H."/>
            <person name="Dew I."/>
            <person name="Miller J.R."/>
            <person name="Flanigan M.J."/>
            <person name="Edwards N.J."/>
            <person name="Bolanos R."/>
            <person name="Fasulo D."/>
            <person name="Halldorsson B.V."/>
            <person name="Hannenhalli S."/>
            <person name="Turner R."/>
            <person name="Yooseph S."/>
            <person name="Lu F."/>
            <person name="Nusskern D.R."/>
            <person name="Shue B.C."/>
            <person name="Zheng X.H."/>
            <person name="Zhong F."/>
            <person name="Delcher A.L."/>
            <person name="Huson D.H."/>
            <person name="Kravitz S.A."/>
            <person name="Mouchard L."/>
            <person name="Reinert K."/>
            <person name="Remington K.A."/>
            <person name="Clark A.G."/>
            <person name="Waterman M.S."/>
            <person name="Eichler E.E."/>
            <person name="Adams M.D."/>
            <person name="Hunkapiller M.W."/>
            <person name="Myers E.W."/>
            <person name="Venter J.C."/>
        </authorList>
    </citation>
    <scope>NUCLEOTIDE SEQUENCE [LARGE SCALE GENOMIC DNA]</scope>
</reference>
<reference key="8">
    <citation type="journal article" date="2004" name="Genome Res.">
        <title>The status, quality, and expansion of the NIH full-length cDNA project: the Mammalian Gene Collection (MGC).</title>
        <authorList>
            <consortium name="The MGC Project Team"/>
        </authorList>
    </citation>
    <scope>NUCLEOTIDE SEQUENCE [LARGE SCALE MRNA]</scope>
    <source>
        <tissue>Bone marrow</tissue>
        <tissue>Brain</tissue>
        <tissue>Kidney</tissue>
        <tissue>Lung</tissue>
        <tissue>Skeletal muscle</tissue>
        <tissue>Skin</tissue>
        <tissue>Testis</tissue>
        <tissue>Urinary bladder</tissue>
    </source>
</reference>
<reference key="9">
    <citation type="journal article" date="1962" name="J. Biol. Chem.">
        <title>The amino acid sequence of human heart cytochrome c.</title>
        <authorList>
            <person name="Matsubara H."/>
            <person name="Smith E.L."/>
        </authorList>
    </citation>
    <scope>PROTEIN SEQUENCE OF 2-105</scope>
    <scope>ACETYLATION AT GLY-2</scope>
    <source>
        <tissue>Heart</tissue>
    </source>
</reference>
<reference key="10">
    <citation type="journal article" date="1963" name="J. Biol. Chem.">
        <title>Human heart cytochrome c. Chymotryptic peptides, tryptic peptides, and the complete amino acid sequence.</title>
        <authorList>
            <person name="Matsubara H."/>
            <person name="Smith E.L."/>
        </authorList>
    </citation>
    <scope>PROTEIN SEQUENCE OF 2-105</scope>
    <source>
        <tissue>Heart</tissue>
    </source>
</reference>
<reference key="11">
    <citation type="journal article" date="1998" name="FEBS Lett.">
        <title>Cytochrome c in the apoptotic and antioxidant cascades.</title>
        <authorList>
            <person name="Skulachev V.P."/>
        </authorList>
    </citation>
    <scope>REVIEW ON ROLE IN APOPTOSIS</scope>
</reference>
<reference key="12">
    <citation type="journal article" date="2009" name="Science">
        <title>Lysine acetylation targets protein complexes and co-regulates major cellular functions.</title>
        <authorList>
            <person name="Choudhary C."/>
            <person name="Kumar C."/>
            <person name="Gnad F."/>
            <person name="Nielsen M.L."/>
            <person name="Rehman M."/>
            <person name="Walther T.C."/>
            <person name="Olsen J.V."/>
            <person name="Mann M."/>
        </authorList>
    </citation>
    <scope>IDENTIFICATION BY MASS SPECTROMETRY [LARGE SCALE ANALYSIS]</scope>
</reference>
<reference key="13">
    <citation type="journal article" date="2011" name="BMC Syst. Biol.">
        <title>Initial characterization of the human central proteome.</title>
        <authorList>
            <person name="Burkard T.R."/>
            <person name="Planyavsky M."/>
            <person name="Kaupe I."/>
            <person name="Breitwieser F.P."/>
            <person name="Buerckstuemmer T."/>
            <person name="Bennett K.L."/>
            <person name="Superti-Furga G."/>
            <person name="Colinge J."/>
        </authorList>
    </citation>
    <scope>IDENTIFICATION BY MASS SPECTROMETRY [LARGE SCALE ANALYSIS]</scope>
</reference>
<reference key="14">
    <citation type="journal article" date="2013" name="Proc. Natl. Acad. Sci. U.S.A.">
        <title>Human mitochondrial holocytochrome c synthase's heme binding, maturation determinants, and complex formation with cytochrome c.</title>
        <authorList>
            <person name="San Francisco B."/>
            <person name="Bretsnyder E.C."/>
            <person name="Kranz R.G."/>
        </authorList>
    </citation>
    <scope>MUTAGENESIS OF LYS-6; PHE-11; CYS-15; CYS-18 AND HIS-19</scope>
    <scope>HEME-BINDING</scope>
</reference>
<reference key="15">
    <citation type="journal article" date="2013" name="J. Proteome Res.">
        <title>Toward a comprehensive characterization of a human cancer cell phosphoproteome.</title>
        <authorList>
            <person name="Zhou H."/>
            <person name="Di Palma S."/>
            <person name="Preisinger C."/>
            <person name="Peng M."/>
            <person name="Polat A.N."/>
            <person name="Heck A.J."/>
            <person name="Mohammed S."/>
        </authorList>
    </citation>
    <scope>IDENTIFICATION BY MASS SPECTROMETRY [LARGE SCALE ANALYSIS]</scope>
    <source>
        <tissue>Erythroleukemia</tissue>
    </source>
</reference>
<reference key="16">
    <citation type="journal article" date="2014" name="J. Proteomics">
        <title>An enzyme assisted RP-RPLC approach for in-depth analysis of human liver phosphoproteome.</title>
        <authorList>
            <person name="Bian Y."/>
            <person name="Song C."/>
            <person name="Cheng K."/>
            <person name="Dong M."/>
            <person name="Wang F."/>
            <person name="Huang J."/>
            <person name="Sun D."/>
            <person name="Wang L."/>
            <person name="Ye M."/>
            <person name="Zou H."/>
        </authorList>
    </citation>
    <scope>IDENTIFICATION BY MASS SPECTROMETRY [LARGE SCALE ANALYSIS]</scope>
    <source>
        <tissue>Liver</tissue>
    </source>
</reference>
<reference key="17">
    <citation type="journal article" date="2015" name="Proteomics">
        <title>N-terminome analysis of the human mitochondrial proteome.</title>
        <authorList>
            <person name="Vaca Jacome A.S."/>
            <person name="Rabilloud T."/>
            <person name="Schaeffer-Reiss C."/>
            <person name="Rompais M."/>
            <person name="Ayoub D."/>
            <person name="Lane L."/>
            <person name="Bairoch A."/>
            <person name="Van Dorsselaer A."/>
            <person name="Carapito C."/>
        </authorList>
    </citation>
    <scope>IDENTIFICATION BY MASS SPECTROMETRY [LARGE SCALE ANALYSIS]</scope>
</reference>
<reference key="18">
    <citation type="submission" date="2003-02" db="PDB data bank">
        <title>Solution structure of reduced recombinant human cytochrome c.</title>
        <authorList>
            <person name="Jeng W.-Y."/>
            <person name="Shiu J.-H."/>
            <person name="Tsai Y.-H."/>
            <person name="Chuang W.-J."/>
        </authorList>
    </citation>
    <scope>STRUCTURE BY NMR</scope>
</reference>
<reference key="19">
    <citation type="journal article" date="2008" name="Nat. Genet.">
        <title>A mutation of human cytochrome c enhances the intrinsic apoptotic pathway but causes only thrombocytopenia.</title>
        <authorList>
            <person name="Morison I.M."/>
            <person name="Cramer Borde E.M.C."/>
            <person name="Cheesman E.J."/>
            <person name="Cheong P.L."/>
            <person name="Holyoake A.J."/>
            <person name="Fichelson S."/>
            <person name="Weeks R.J."/>
            <person name="Lo A."/>
            <person name="Davies S.M.K."/>
            <person name="Wilbanks S.M."/>
            <person name="Fagerlund R.D."/>
            <person name="Ludgate M.W."/>
            <person name="da Silva Tatley F.M."/>
            <person name="Coker M.S.A."/>
            <person name="Bockett N.A."/>
            <person name="Hughes G."/>
            <person name="Pippig D.A."/>
            <person name="Smith M.P."/>
            <person name="Capron C."/>
            <person name="Ledgerwood E.C."/>
        </authorList>
    </citation>
    <scope>VARIANT THC4 SER-42</scope>
    <scope>IDENTIFICATION BY MASS SPECTROMETRY</scope>
    <scope>CHARACTERIZATION OF VARIANT THC4 SER-42</scope>
    <scope>X-RAY CRYSTALLOGRAPHY (2.75 ANGSTROMS) OF VARIANT THC4 SER-42 AND WILD TYPE</scope>
</reference>
<evidence type="ECO:0000250" key="1"/>
<evidence type="ECO:0000250" key="2">
    <source>
        <dbReference type="UniProtKB" id="P62894"/>
    </source>
</evidence>
<evidence type="ECO:0000250" key="3">
    <source>
        <dbReference type="UniProtKB" id="P62897"/>
    </source>
</evidence>
<evidence type="ECO:0000255" key="4">
    <source>
        <dbReference type="PROSITE-ProRule" id="PRU00433"/>
    </source>
</evidence>
<evidence type="ECO:0000269" key="5">
    <source>
    </source>
</evidence>
<evidence type="ECO:0000269" key="6">
    <source>
    </source>
</evidence>
<evidence type="ECO:0000269" key="7">
    <source>
    </source>
</evidence>
<evidence type="ECO:0000269" key="8">
    <source>
    </source>
</evidence>
<evidence type="ECO:0000305" key="9"/>
<evidence type="ECO:0007829" key="10">
    <source>
        <dbReference type="PDB" id="1J3S"/>
    </source>
</evidence>
<evidence type="ECO:0007829" key="11">
    <source>
        <dbReference type="PDB" id="2N3Y"/>
    </source>
</evidence>
<evidence type="ECO:0007829" key="12">
    <source>
        <dbReference type="PDB" id="2N9I"/>
    </source>
</evidence>
<evidence type="ECO:0007829" key="13">
    <source>
        <dbReference type="PDB" id="5TY3"/>
    </source>
</evidence>
<name>CYC_HUMAN</name>
<gene>
    <name type="primary">CYCS</name>
    <name type="synonym">CYC</name>
</gene>
<dbReference type="EMBL" id="M22877">
    <property type="protein sequence ID" value="AAA35732.1"/>
    <property type="molecule type" value="Genomic_DNA"/>
</dbReference>
<dbReference type="EMBL" id="BT006946">
    <property type="protein sequence ID" value="AAP35592.1"/>
    <property type="molecule type" value="mRNA"/>
</dbReference>
<dbReference type="EMBL" id="AK311836">
    <property type="protein sequence ID" value="BAG34778.1"/>
    <property type="molecule type" value="mRNA"/>
</dbReference>
<dbReference type="EMBL" id="AL713681">
    <property type="protein sequence ID" value="CAD28485.1"/>
    <property type="molecule type" value="mRNA"/>
</dbReference>
<dbReference type="EMBL" id="AC007487">
    <property type="protein sequence ID" value="AAQ96844.1"/>
    <property type="molecule type" value="Genomic_DNA"/>
</dbReference>
<dbReference type="EMBL" id="CH236948">
    <property type="protein sequence ID" value="EAL24239.1"/>
    <property type="molecule type" value="Genomic_DNA"/>
</dbReference>
<dbReference type="EMBL" id="CH471073">
    <property type="protein sequence ID" value="EAW93822.1"/>
    <property type="molecule type" value="Genomic_DNA"/>
</dbReference>
<dbReference type="EMBL" id="BC005299">
    <property type="protein sequence ID" value="AAH05299.1"/>
    <property type="molecule type" value="mRNA"/>
</dbReference>
<dbReference type="EMBL" id="BC008475">
    <property type="protein sequence ID" value="AAH08475.1"/>
    <property type="molecule type" value="mRNA"/>
</dbReference>
<dbReference type="EMBL" id="BC008477">
    <property type="protein sequence ID" value="AAH08477.1"/>
    <property type="molecule type" value="mRNA"/>
</dbReference>
<dbReference type="EMBL" id="BC009578">
    <property type="protein sequence ID" value="AAH09578.1"/>
    <property type="molecule type" value="mRNA"/>
</dbReference>
<dbReference type="EMBL" id="BC009579">
    <property type="protein sequence ID" value="AAH09579.1"/>
    <property type="molecule type" value="mRNA"/>
</dbReference>
<dbReference type="EMBL" id="BC009582">
    <property type="protein sequence ID" value="AAH09582.1"/>
    <property type="molecule type" value="mRNA"/>
</dbReference>
<dbReference type="EMBL" id="BC009587">
    <property type="protein sequence ID" value="AAH09587.1"/>
    <property type="molecule type" value="mRNA"/>
</dbReference>
<dbReference type="EMBL" id="BC009602">
    <property type="protein sequence ID" value="AAH09602.1"/>
    <property type="molecule type" value="mRNA"/>
</dbReference>
<dbReference type="EMBL" id="BC009607">
    <property type="protein sequence ID" value="AAH09607.1"/>
    <property type="molecule type" value="mRNA"/>
</dbReference>
<dbReference type="EMBL" id="BC014359">
    <property type="protein sequence ID" value="AAH14359.1"/>
    <property type="molecule type" value="mRNA"/>
</dbReference>
<dbReference type="EMBL" id="BC014361">
    <property type="protein sequence ID" value="AAH14361.1"/>
    <property type="molecule type" value="mRNA"/>
</dbReference>
<dbReference type="EMBL" id="BC015130">
    <property type="protein sequence ID" value="AAH15130.1"/>
    <property type="molecule type" value="mRNA"/>
</dbReference>
<dbReference type="EMBL" id="BC016006">
    <property type="protein sequence ID" value="AAH16006.1"/>
    <property type="molecule type" value="mRNA"/>
</dbReference>
<dbReference type="EMBL" id="BC021994">
    <property type="protein sequence ID" value="AAH21994.1"/>
    <property type="molecule type" value="mRNA"/>
</dbReference>
<dbReference type="EMBL" id="BC022330">
    <property type="protein sequence ID" value="AAH22330.1"/>
    <property type="molecule type" value="mRNA"/>
</dbReference>
<dbReference type="EMBL" id="BC067222">
    <property type="protein sequence ID" value="AAH67222.1"/>
    <property type="molecule type" value="mRNA"/>
</dbReference>
<dbReference type="EMBL" id="BC068464">
    <property type="protein sequence ID" value="AAH68464.1"/>
    <property type="molecule type" value="mRNA"/>
</dbReference>
<dbReference type="EMBL" id="BC070156">
    <property type="protein sequence ID" value="AAH70156.1"/>
    <property type="molecule type" value="mRNA"/>
</dbReference>
<dbReference type="EMBL" id="BC070346">
    <property type="protein sequence ID" value="AAH70346.1"/>
    <property type="molecule type" value="mRNA"/>
</dbReference>
<dbReference type="EMBL" id="BC071761">
    <property type="protein sequence ID" value="AAH71761.1"/>
    <property type="molecule type" value="mRNA"/>
</dbReference>
<dbReference type="CCDS" id="CCDS5393.1"/>
<dbReference type="PIR" id="A31764">
    <property type="entry name" value="CCHU"/>
</dbReference>
<dbReference type="RefSeq" id="NP_061820.1">
    <property type="nucleotide sequence ID" value="NM_018947.6"/>
</dbReference>
<dbReference type="PDB" id="1J3S">
    <property type="method" value="NMR"/>
    <property type="chains" value="A=2-105"/>
</dbReference>
<dbReference type="PDB" id="2N3Y">
    <property type="method" value="NMR"/>
    <property type="chains" value="A=2-105"/>
</dbReference>
<dbReference type="PDB" id="2N9I">
    <property type="method" value="NMR"/>
    <property type="chains" value="A=2-105"/>
</dbReference>
<dbReference type="PDB" id="2N9J">
    <property type="method" value="NMR"/>
    <property type="chains" value="A=2-105"/>
</dbReference>
<dbReference type="PDB" id="3NWV">
    <property type="method" value="X-ray"/>
    <property type="resolution" value="1.90 A"/>
    <property type="chains" value="A/B/C/D=2-105"/>
</dbReference>
<dbReference type="PDB" id="3ZCF">
    <property type="method" value="X-ray"/>
    <property type="resolution" value="1.65 A"/>
    <property type="chains" value="A/B/C/D=2-105"/>
</dbReference>
<dbReference type="PDB" id="3ZOO">
    <property type="method" value="X-ray"/>
    <property type="resolution" value="1.35 A"/>
    <property type="chains" value="A/B/C/D=2-105"/>
</dbReference>
<dbReference type="PDB" id="5EXQ">
    <property type="method" value="X-ray"/>
    <property type="resolution" value="1.60 A"/>
    <property type="chains" value="A/B=2-105"/>
</dbReference>
<dbReference type="PDB" id="5O10">
    <property type="method" value="X-ray"/>
    <property type="resolution" value="1.36 A"/>
    <property type="chains" value="A/B=2-105"/>
</dbReference>
<dbReference type="PDB" id="5TY3">
    <property type="method" value="X-ray"/>
    <property type="resolution" value="1.25 A"/>
    <property type="chains" value="A/B=2-105"/>
</dbReference>
<dbReference type="PDB" id="6DUJ">
    <property type="method" value="X-ray"/>
    <property type="resolution" value="1.82 A"/>
    <property type="chains" value="A/C=2-105"/>
</dbReference>
<dbReference type="PDB" id="6ECJ">
    <property type="method" value="X-ray"/>
    <property type="resolution" value="2.70 A"/>
    <property type="chains" value="A/B/C/D/E/F/G/H=2-105"/>
</dbReference>
<dbReference type="PDB" id="6XNK">
    <property type="method" value="X-ray"/>
    <property type="resolution" value="2.08 A"/>
    <property type="chains" value="A/C/E/G=2-105"/>
</dbReference>
<dbReference type="PDBsum" id="1J3S"/>
<dbReference type="PDBsum" id="2N3Y"/>
<dbReference type="PDBsum" id="2N9I"/>
<dbReference type="PDBsum" id="2N9J"/>
<dbReference type="PDBsum" id="3NWV"/>
<dbReference type="PDBsum" id="3ZCF"/>
<dbReference type="PDBsum" id="3ZOO"/>
<dbReference type="PDBsum" id="5EXQ"/>
<dbReference type="PDBsum" id="5O10"/>
<dbReference type="PDBsum" id="5TY3"/>
<dbReference type="PDBsum" id="6DUJ"/>
<dbReference type="PDBsum" id="6ECJ"/>
<dbReference type="PDBsum" id="6XNK"/>
<dbReference type="BMRB" id="P99999"/>
<dbReference type="SASBDB" id="P99999"/>
<dbReference type="SMR" id="P99999"/>
<dbReference type="BioGRID" id="119922">
    <property type="interactions" value="179"/>
</dbReference>
<dbReference type="ComplexPortal" id="CPX-3762">
    <property type="entry name" value="Apoptosome"/>
</dbReference>
<dbReference type="CORUM" id="P99999"/>
<dbReference type="DIP" id="DIP-29683N"/>
<dbReference type="FunCoup" id="P99999">
    <property type="interactions" value="2521"/>
</dbReference>
<dbReference type="IntAct" id="P99999">
    <property type="interactions" value="118"/>
</dbReference>
<dbReference type="MINT" id="P99999"/>
<dbReference type="STRING" id="9606.ENSP00000307786"/>
<dbReference type="BindingDB" id="P99999"/>
<dbReference type="ChEMBL" id="CHEMBL2189163"/>
<dbReference type="DrugBank" id="DB11638">
    <property type="generic name" value="Artenimol"/>
</dbReference>
<dbReference type="DrugBank" id="DB03317">
    <property type="generic name" value="Ferroheme C"/>
</dbReference>
<dbReference type="DrugBank" id="DB03366">
    <property type="generic name" value="Imidazole"/>
</dbReference>
<dbReference type="DrugBank" id="DB01017">
    <property type="generic name" value="Minocycline"/>
</dbReference>
<dbReference type="DrugBank" id="DB02110">
    <property type="generic name" value="Protoporphyrin Ix Containing Co"/>
</dbReference>
<dbReference type="DrugBank" id="DB03977">
    <property type="generic name" value="Trimethyllysine"/>
</dbReference>
<dbReference type="DrugBank" id="DB03934">
    <property type="generic name" value="Zinc protoporphyrin"/>
</dbReference>
<dbReference type="DrugBank" id="DB04249">
    <property type="generic name" value="Zinc Substituted Heme C"/>
</dbReference>
<dbReference type="DrugCentral" id="P99999"/>
<dbReference type="MoonDB" id="P99999">
    <property type="type" value="Curated"/>
</dbReference>
<dbReference type="TCDB" id="1.A.132.1.1">
    <property type="family name" value="the azolectin:cytochrome c pore (accp) family"/>
</dbReference>
<dbReference type="GlyGen" id="P99999">
    <property type="glycosylation" value="3 sites, 1 O-linked glycan (1 site)"/>
</dbReference>
<dbReference type="iPTMnet" id="P99999"/>
<dbReference type="PhosphoSitePlus" id="P99999"/>
<dbReference type="SwissPalm" id="P99999"/>
<dbReference type="BioMuta" id="CYCS"/>
<dbReference type="DMDM" id="42560196"/>
<dbReference type="jPOST" id="P99999"/>
<dbReference type="MassIVE" id="P99999"/>
<dbReference type="PaxDb" id="9606-ENSP00000307786"/>
<dbReference type="PeptideAtlas" id="P99999"/>
<dbReference type="ProteomicsDB" id="57831"/>
<dbReference type="Pumba" id="P99999"/>
<dbReference type="TopDownProteomics" id="P99999"/>
<dbReference type="ABCD" id="P99999">
    <property type="antibodies" value="2 sequenced antibodies"/>
</dbReference>
<dbReference type="Antibodypedia" id="3917">
    <property type="antibodies" value="1435 antibodies from 48 providers"/>
</dbReference>
<dbReference type="DNASU" id="54205"/>
<dbReference type="Ensembl" id="ENST00000305786.7">
    <property type="protein sequence ID" value="ENSP00000307786.2"/>
    <property type="gene ID" value="ENSG00000172115.9"/>
</dbReference>
<dbReference type="Ensembl" id="ENST00000409409.5">
    <property type="protein sequence ID" value="ENSP00000386270.1"/>
    <property type="gene ID" value="ENSG00000172115.9"/>
</dbReference>
<dbReference type="Ensembl" id="ENST00000409764.5">
    <property type="protein sequence ID" value="ENSP00000387279.1"/>
    <property type="gene ID" value="ENSG00000172115.9"/>
</dbReference>
<dbReference type="GeneID" id="54205"/>
<dbReference type="KEGG" id="hsa:54205"/>
<dbReference type="MANE-Select" id="ENST00000305786.7">
    <property type="protein sequence ID" value="ENSP00000307786.2"/>
    <property type="RefSeq nucleotide sequence ID" value="NM_018947.6"/>
    <property type="RefSeq protein sequence ID" value="NP_061820.1"/>
</dbReference>
<dbReference type="UCSC" id="uc003sxl.4">
    <property type="organism name" value="human"/>
</dbReference>
<dbReference type="AGR" id="HGNC:19986"/>
<dbReference type="CTD" id="54205"/>
<dbReference type="DisGeNET" id="54205"/>
<dbReference type="GeneCards" id="CYCS"/>
<dbReference type="HGNC" id="HGNC:19986">
    <property type="gene designation" value="CYCS"/>
</dbReference>
<dbReference type="HPA" id="ENSG00000172115">
    <property type="expression patterns" value="Tissue enhanced (tongue)"/>
</dbReference>
<dbReference type="MalaCards" id="CYCS"/>
<dbReference type="MIM" id="123970">
    <property type="type" value="gene"/>
</dbReference>
<dbReference type="MIM" id="612004">
    <property type="type" value="phenotype"/>
</dbReference>
<dbReference type="neXtProt" id="NX_P99999"/>
<dbReference type="OpenTargets" id="ENSG00000172115"/>
<dbReference type="Orphanet" id="168629">
    <property type="disease" value="Autosomal thrombocytopenia with normal platelets"/>
</dbReference>
<dbReference type="PharmGKB" id="PA134981636"/>
<dbReference type="VEuPathDB" id="HostDB:ENSG00000172115"/>
<dbReference type="eggNOG" id="KOG3453">
    <property type="taxonomic scope" value="Eukaryota"/>
</dbReference>
<dbReference type="GeneTree" id="ENSGT00390000009405"/>
<dbReference type="InParanoid" id="P99999"/>
<dbReference type="OMA" id="KARCAQC"/>
<dbReference type="OrthoDB" id="9508248at2759"/>
<dbReference type="PAN-GO" id="P99999">
    <property type="GO annotations" value="4 GO annotations based on evolutionary models"/>
</dbReference>
<dbReference type="PhylomeDB" id="P99999"/>
<dbReference type="TreeFam" id="TF300226"/>
<dbReference type="BioCyc" id="MetaCyc:ENSG00000172115-MONOMER"/>
<dbReference type="PathwayCommons" id="P99999"/>
<dbReference type="Reactome" id="R-HSA-111457">
    <property type="pathway name" value="Release of apoptotic factors from the mitochondria"/>
</dbReference>
<dbReference type="Reactome" id="R-HSA-111458">
    <property type="pathway name" value="Formation of apoptosome"/>
</dbReference>
<dbReference type="Reactome" id="R-HSA-111459">
    <property type="pathway name" value="Activation of caspases through apoptosome-mediated cleavage"/>
</dbReference>
<dbReference type="Reactome" id="R-HSA-111463">
    <property type="pathway name" value="SMAC (DIABLO) binds to IAPs"/>
</dbReference>
<dbReference type="Reactome" id="R-HSA-111464">
    <property type="pathway name" value="SMAC(DIABLO)-mediated dissociation of IAP:caspase complexes"/>
</dbReference>
<dbReference type="Reactome" id="R-HSA-2151201">
    <property type="pathway name" value="Transcriptional activation of mitochondrial biogenesis"/>
</dbReference>
<dbReference type="Reactome" id="R-HSA-3299685">
    <property type="pathway name" value="Detoxification of Reactive Oxygen Species"/>
</dbReference>
<dbReference type="Reactome" id="R-HSA-5620971">
    <property type="pathway name" value="Pyroptosis"/>
</dbReference>
<dbReference type="Reactome" id="R-HSA-5628897">
    <property type="pathway name" value="TP53 Regulates Metabolic Genes"/>
</dbReference>
<dbReference type="Reactome" id="R-HSA-611105">
    <property type="pathway name" value="Respiratory electron transport"/>
</dbReference>
<dbReference type="Reactome" id="R-HSA-9627069">
    <property type="pathway name" value="Regulation of the apoptosome activity"/>
</dbReference>
<dbReference type="Reactome" id="R-HSA-9707564">
    <property type="pathway name" value="Cytoprotection by HMOX1"/>
</dbReference>
<dbReference type="SignaLink" id="P99999"/>
<dbReference type="SIGNOR" id="P99999"/>
<dbReference type="BioGRID-ORCS" id="54205">
    <property type="hits" value="529 hits in 1082 CRISPR screens"/>
</dbReference>
<dbReference type="CD-CODE" id="91857CE7">
    <property type="entry name" value="Nucleolus"/>
</dbReference>
<dbReference type="CD-CODE" id="FB4E32DD">
    <property type="entry name" value="Presynaptic clusters and postsynaptic densities"/>
</dbReference>
<dbReference type="ChiTaRS" id="CYCS">
    <property type="organism name" value="human"/>
</dbReference>
<dbReference type="EvolutionaryTrace" id="P99999"/>
<dbReference type="GeneWiki" id="Cytochrome_c"/>
<dbReference type="GenomeRNAi" id="54205"/>
<dbReference type="Pharos" id="P99999">
    <property type="development level" value="Tchem"/>
</dbReference>
<dbReference type="PRO" id="PR:P99999"/>
<dbReference type="Proteomes" id="UP000005640">
    <property type="component" value="Chromosome 7"/>
</dbReference>
<dbReference type="RNAct" id="P99999">
    <property type="molecule type" value="protein"/>
</dbReference>
<dbReference type="Bgee" id="ENSG00000172115">
    <property type="expression patterns" value="Expressed in mucosa of transverse colon and 181 other cell types or tissues"/>
</dbReference>
<dbReference type="ExpressionAtlas" id="P99999">
    <property type="expression patterns" value="baseline and differential"/>
</dbReference>
<dbReference type="GO" id="GO:0043293">
    <property type="term" value="C:apoptosome"/>
    <property type="evidence" value="ECO:0000353"/>
    <property type="project" value="ComplexPortal"/>
</dbReference>
<dbReference type="GO" id="GO:0005829">
    <property type="term" value="C:cytosol"/>
    <property type="evidence" value="ECO:0000314"/>
    <property type="project" value="ARUK-UCL"/>
</dbReference>
<dbReference type="GO" id="GO:0005743">
    <property type="term" value="C:mitochondrial inner membrane"/>
    <property type="evidence" value="ECO:0000304"/>
    <property type="project" value="Reactome"/>
</dbReference>
<dbReference type="GO" id="GO:0005758">
    <property type="term" value="C:mitochondrial intermembrane space"/>
    <property type="evidence" value="ECO:0000314"/>
    <property type="project" value="CAFA"/>
</dbReference>
<dbReference type="GO" id="GO:0005739">
    <property type="term" value="C:mitochondrion"/>
    <property type="evidence" value="ECO:0000314"/>
    <property type="project" value="ARUK-UCL"/>
</dbReference>
<dbReference type="GO" id="GO:0005634">
    <property type="term" value="C:nucleus"/>
    <property type="evidence" value="ECO:0000314"/>
    <property type="project" value="LIFEdb"/>
</dbReference>
<dbReference type="GO" id="GO:0009055">
    <property type="term" value="F:electron transfer activity"/>
    <property type="evidence" value="ECO:0000318"/>
    <property type="project" value="GO_Central"/>
</dbReference>
<dbReference type="GO" id="GO:0020037">
    <property type="term" value="F:heme binding"/>
    <property type="evidence" value="ECO:0000304"/>
    <property type="project" value="UniProtKB"/>
</dbReference>
<dbReference type="GO" id="GO:0046872">
    <property type="term" value="F:metal ion binding"/>
    <property type="evidence" value="ECO:0007669"/>
    <property type="project" value="UniProtKB-KW"/>
</dbReference>
<dbReference type="GO" id="GO:0097190">
    <property type="term" value="P:apoptotic signaling pathway"/>
    <property type="evidence" value="ECO:0000250"/>
    <property type="project" value="ARUK-UCL"/>
</dbReference>
<dbReference type="GO" id="GO:0045333">
    <property type="term" value="P:cellular respiration"/>
    <property type="evidence" value="ECO:0000304"/>
    <property type="project" value="UniProtKB"/>
</dbReference>
<dbReference type="GO" id="GO:0097194">
    <property type="term" value="P:execution phase of apoptosis"/>
    <property type="evidence" value="ECO:0000304"/>
    <property type="project" value="UniProtKB"/>
</dbReference>
<dbReference type="GO" id="GO:0097193">
    <property type="term" value="P:intrinsic apoptotic signaling pathway"/>
    <property type="evidence" value="ECO:0000303"/>
    <property type="project" value="ComplexPortal"/>
</dbReference>
<dbReference type="GO" id="GO:0006123">
    <property type="term" value="P:mitochondrial electron transport, cytochrome c to oxygen"/>
    <property type="evidence" value="ECO:0000318"/>
    <property type="project" value="GO_Central"/>
</dbReference>
<dbReference type="GO" id="GO:0006122">
    <property type="term" value="P:mitochondrial electron transport, ubiquinol to cytochrome c"/>
    <property type="evidence" value="ECO:0000318"/>
    <property type="project" value="GO_Central"/>
</dbReference>
<dbReference type="FunFam" id="1.10.760.10:FF:000008">
    <property type="entry name" value="Cytochrome c"/>
    <property type="match status" value="1"/>
</dbReference>
<dbReference type="Gene3D" id="1.10.760.10">
    <property type="entry name" value="Cytochrome c-like domain"/>
    <property type="match status" value="1"/>
</dbReference>
<dbReference type="InterPro" id="IPR009056">
    <property type="entry name" value="Cyt_c-like_dom"/>
</dbReference>
<dbReference type="InterPro" id="IPR036909">
    <property type="entry name" value="Cyt_c-like_dom_sf"/>
</dbReference>
<dbReference type="InterPro" id="IPR002327">
    <property type="entry name" value="Cyt_c_1A/1B"/>
</dbReference>
<dbReference type="PANTHER" id="PTHR11961">
    <property type="entry name" value="CYTOCHROME C"/>
    <property type="match status" value="1"/>
</dbReference>
<dbReference type="Pfam" id="PF00034">
    <property type="entry name" value="Cytochrom_C"/>
    <property type="match status" value="1"/>
</dbReference>
<dbReference type="PRINTS" id="PR00604">
    <property type="entry name" value="CYTCHRMECIAB"/>
</dbReference>
<dbReference type="SUPFAM" id="SSF46626">
    <property type="entry name" value="Cytochrome c"/>
    <property type="match status" value="1"/>
</dbReference>
<dbReference type="PROSITE" id="PS51007">
    <property type="entry name" value="CYTC"/>
    <property type="match status" value="1"/>
</dbReference>